<sequence>MVVEHPEFLKAGKEPGLQIWRVEKFDLVPVPPNLYGDFFTGDAYVILKTVQLRNGNLQYDLHYWLGNECSQDESGAAAIFTVQLDDYLNGRAVQHREVQGFESATFLGYFKSGLKYKKGGVASGFKHVVPNEVVVQRLFQVKGRRVVRATEVPVSWESFNNGDCFILDLGNDIYQWCGSSSNRFERLKATQVSKGIRDNERSGRARVHVSEEGAEPEAMLEVLGPKPALPAGTEDTAKEDAANRKLAKLYKVSNGAGTMSVSLVADENPFAQGALRSEDCFILDHGKDGKIFVWKGRQANTEERKAALKTASDFISKMDYPRQTQVSVLPEGGETPLFKQFFKNWRDPDQTDGPGLSYLSSHIANVERVPFDAATLHTSTAMAAQHGMDDDGRGQKQIWRIEGSDKVPVDPATYGQFYGGDSYIILYNYRHGGRQGQIIYNWQGAQSTQDEVAASAILTAQLDEELGGTPVRSRVVQGKEPAHLMSLFGGKPMIIYRGGTSREGGQTAPASTRLFQVRASSSGATRAVEVMPKAGALNSNDAFVLKTPSAAYLWVGAGASEAEKTGALELLRVLRAQPVQVAEGSEPDSFWEALGGKAAYRTSPRLKDKKMDAHPPRLFACSNKIGRFVIEEVPGELMQEDLATDDVMLLDTWDQVFVWVGKDSQEEEKTEALTSAKRYIETDPANRDRRTPITVVKQGFEPPSFVGWFLGWDDNYWSVDPLDRALAELAA</sequence>
<name>GELS_BOVIN</name>
<proteinExistence type="evidence at transcript level"/>
<protein>
    <recommendedName>
        <fullName>Gelsolin</fullName>
    </recommendedName>
    <alternativeName>
        <fullName>Actin-depolymerizing factor</fullName>
        <shortName>ADF</shortName>
    </alternativeName>
    <alternativeName>
        <fullName>Brevin</fullName>
    </alternativeName>
</protein>
<gene>
    <name type="primary">GSN</name>
</gene>
<feature type="chain" id="PRO_0000367499" description="Gelsolin">
    <location>
        <begin position="1"/>
        <end position="731"/>
    </location>
</feature>
<feature type="repeat" description="Gelsolin-like 1" evidence="4">
    <location>
        <begin position="25"/>
        <end position="107"/>
    </location>
</feature>
<feature type="repeat" description="Gelsolin-like 2" evidence="4">
    <location>
        <begin position="147"/>
        <end position="219"/>
    </location>
</feature>
<feature type="repeat" description="Gelsolin-like 3" evidence="4">
    <location>
        <begin position="266"/>
        <end position="338"/>
    </location>
</feature>
<feature type="repeat" description="Gelsolin-like 4" evidence="4">
    <location>
        <begin position="404"/>
        <end position="485"/>
    </location>
</feature>
<feature type="repeat" description="Gelsolin-like 5" evidence="4">
    <location>
        <begin position="527"/>
        <end position="591"/>
    </location>
</feature>
<feature type="repeat" description="Gelsolin-like 6" evidence="4">
    <location>
        <begin position="630"/>
        <end position="705"/>
    </location>
</feature>
<feature type="region of interest" description="Actin-severing" evidence="4">
    <location>
        <begin position="2"/>
        <end position="125"/>
    </location>
</feature>
<feature type="region of interest" description="Actin-actin interfilament contact point">
    <location>
        <begin position="72"/>
        <end position="75"/>
    </location>
</feature>
<feature type="region of interest" description="Disordered" evidence="5">
    <location>
        <begin position="197"/>
        <end position="216"/>
    </location>
</feature>
<feature type="region of interest" description="Actin-binding, Ca-sensitive" evidence="4">
    <location>
        <begin position="383"/>
        <end position="731"/>
    </location>
</feature>
<feature type="compositionally biased region" description="Basic and acidic residues" evidence="5">
    <location>
        <begin position="197"/>
        <end position="211"/>
    </location>
</feature>
<feature type="binding site" evidence="2">
    <location>
        <position position="41"/>
    </location>
    <ligand>
        <name>Ca(2+)</name>
        <dbReference type="ChEBI" id="CHEBI:29108"/>
        <label>1</label>
        <note>type II</note>
    </ligand>
</feature>
<feature type="binding site" evidence="2">
    <location>
        <position position="42"/>
    </location>
    <ligand>
        <name>Ca(2+)</name>
        <dbReference type="ChEBI" id="CHEBI:29108"/>
        <label>1</label>
        <note>type II</note>
    </ligand>
</feature>
<feature type="binding site" evidence="2">
    <location>
        <position position="73"/>
    </location>
    <ligand>
        <name>Ca(2+)</name>
        <dbReference type="ChEBI" id="CHEBI:29108"/>
        <label>1</label>
        <note>type II</note>
    </ligand>
</feature>
<feature type="binding site" evidence="2">
    <location>
        <position position="85"/>
    </location>
    <ligand>
        <name>Ca(2+)</name>
        <dbReference type="ChEBI" id="CHEBI:29108"/>
        <label>2</label>
        <note>type I</note>
    </ligand>
</feature>
<feature type="binding site" evidence="2">
    <location>
        <position position="90"/>
    </location>
    <ligand>
        <name>Ca(2+)</name>
        <dbReference type="ChEBI" id="CHEBI:29108"/>
        <label>2</label>
        <note>type I</note>
    </ligand>
</feature>
<feature type="binding site" evidence="2">
    <location>
        <position position="92"/>
    </location>
    <ligand>
        <name>Ca(2+)</name>
        <dbReference type="ChEBI" id="CHEBI:29108"/>
        <label>2</label>
        <note>type I</note>
    </ligand>
</feature>
<feature type="binding site" evidence="1">
    <location>
        <begin position="111"/>
        <end position="118"/>
    </location>
    <ligand>
        <name>a 1,2-diacyl-sn-glycero-3-phospho-(1D-myo-inositol-4,5-bisphosphate)</name>
        <dbReference type="ChEBI" id="CHEBI:58456"/>
    </ligand>
</feature>
<feature type="binding site" evidence="2">
    <location>
        <position position="121"/>
    </location>
    <ligand>
        <name>Ca(2+)</name>
        <dbReference type="ChEBI" id="CHEBI:29108"/>
        <label>1</label>
        <note>type II</note>
    </ligand>
</feature>
<feature type="binding site" evidence="1">
    <location>
        <begin position="137"/>
        <end position="145"/>
    </location>
    <ligand>
        <name>a 1,2-diacyl-sn-glycero-3-phospho-(1D-myo-inositol-4,5-bisphosphate)</name>
        <dbReference type="ChEBI" id="CHEBI:58456"/>
    </ligand>
</feature>
<feature type="binding site" evidence="2">
    <location>
        <position position="162"/>
    </location>
    <ligand>
        <name>Ca(2+)</name>
        <dbReference type="ChEBI" id="CHEBI:29108"/>
        <label>3</label>
        <note>type II</note>
    </ligand>
</feature>
<feature type="binding site" evidence="2">
    <location>
        <position position="163"/>
    </location>
    <ligand>
        <name>Ca(2+)</name>
        <dbReference type="ChEBI" id="CHEBI:29108"/>
        <label>3</label>
        <note>type II</note>
    </ligand>
</feature>
<feature type="binding site" evidence="2">
    <location>
        <position position="185"/>
    </location>
    <ligand>
        <name>Ca(2+)</name>
        <dbReference type="ChEBI" id="CHEBI:29108"/>
        <label>3</label>
        <note>type II</note>
    </ligand>
</feature>
<feature type="binding site" evidence="2">
    <location>
        <position position="235"/>
    </location>
    <ligand>
        <name>Ca(2+)</name>
        <dbReference type="ChEBI" id="CHEBI:29108"/>
        <label>3</label>
        <note>type II</note>
    </ligand>
</feature>
<feature type="binding site" evidence="2">
    <location>
        <position position="278"/>
    </location>
    <ligand>
        <name>Ca(2+)</name>
        <dbReference type="ChEBI" id="CHEBI:29108"/>
        <label>4</label>
        <note>type II</note>
    </ligand>
</feature>
<feature type="binding site" evidence="2">
    <location>
        <position position="279"/>
    </location>
    <ligand>
        <name>Ca(2+)</name>
        <dbReference type="ChEBI" id="CHEBI:29108"/>
        <label>4</label>
        <note>type II</note>
    </ligand>
</feature>
<feature type="binding site" evidence="2">
    <location>
        <position position="303"/>
    </location>
    <ligand>
        <name>Ca(2+)</name>
        <dbReference type="ChEBI" id="CHEBI:29108"/>
        <label>4</label>
        <note>type II</note>
    </ligand>
</feature>
<feature type="binding site" evidence="2">
    <location>
        <position position="420"/>
    </location>
    <ligand>
        <name>Ca(2+)</name>
        <dbReference type="ChEBI" id="CHEBI:29108"/>
        <label>5</label>
        <note>type II</note>
    </ligand>
</feature>
<feature type="binding site" evidence="2">
    <location>
        <position position="421"/>
    </location>
    <ligand>
        <name>Ca(2+)</name>
        <dbReference type="ChEBI" id="CHEBI:29108"/>
        <label>5</label>
        <note>type II</note>
    </ligand>
</feature>
<feature type="binding site" evidence="2">
    <location>
        <position position="451"/>
    </location>
    <ligand>
        <name>Ca(2+)</name>
        <dbReference type="ChEBI" id="CHEBI:29108"/>
        <label>5</label>
        <note>type II</note>
    </ligand>
</feature>
<feature type="binding site" evidence="2">
    <location>
        <position position="463"/>
    </location>
    <ligand>
        <name>Ca(2+)</name>
        <dbReference type="ChEBI" id="CHEBI:29108"/>
        <label>6</label>
        <note>type I</note>
    </ligand>
</feature>
<feature type="binding site" evidence="2">
    <location>
        <position position="468"/>
    </location>
    <ligand>
        <name>Ca(2+)</name>
        <dbReference type="ChEBI" id="CHEBI:29108"/>
        <label>6</label>
        <note>type I</note>
    </ligand>
</feature>
<feature type="binding site" evidence="2">
    <location>
        <position position="470"/>
    </location>
    <ligand>
        <name>Ca(2+)</name>
        <dbReference type="ChEBI" id="CHEBI:29108"/>
        <label>6</label>
        <note>type I</note>
    </ligand>
</feature>
<feature type="binding site" evidence="2">
    <location>
        <position position="500"/>
    </location>
    <ligand>
        <name>Ca(2+)</name>
        <dbReference type="ChEBI" id="CHEBI:29108"/>
        <label>5</label>
        <note>type II</note>
    </ligand>
</feature>
<feature type="binding site" evidence="2">
    <location>
        <position position="540"/>
    </location>
    <ligand>
        <name>Ca(2+)</name>
        <dbReference type="ChEBI" id="CHEBI:29108"/>
        <label>7</label>
        <note>type II</note>
    </ligand>
</feature>
<feature type="binding site" evidence="2">
    <location>
        <position position="541"/>
    </location>
    <ligand>
        <name>Ca(2+)</name>
        <dbReference type="ChEBI" id="CHEBI:29108"/>
        <label>7</label>
        <note>type II</note>
    </ligand>
</feature>
<feature type="binding site" evidence="2">
    <location>
        <position position="563"/>
    </location>
    <ligand>
        <name>Ca(2+)</name>
        <dbReference type="ChEBI" id="CHEBI:29108"/>
        <label>7</label>
        <note>type II</note>
    </ligand>
</feature>
<feature type="binding site" evidence="2">
    <location>
        <position position="645"/>
    </location>
    <ligand>
        <name>Ca(2+)</name>
        <dbReference type="ChEBI" id="CHEBI:29108"/>
        <label>8</label>
        <note>type II</note>
    </ligand>
</feature>
<feature type="binding site" evidence="2">
    <location>
        <position position="646"/>
    </location>
    <ligand>
        <name>Ca(2+)</name>
        <dbReference type="ChEBI" id="CHEBI:29108"/>
        <label>8</label>
        <note>type II</note>
    </ligand>
</feature>
<feature type="binding site" evidence="2">
    <location>
        <position position="668"/>
    </location>
    <ligand>
        <name>Ca(2+)</name>
        <dbReference type="ChEBI" id="CHEBI:29108"/>
        <label>8</label>
        <note>type II</note>
    </ligand>
</feature>
<feature type="modified residue" description="Phosphotyrosine" evidence="2">
    <location>
        <position position="35"/>
    </location>
</feature>
<feature type="modified residue" description="Phosphotyrosine" evidence="2">
    <location>
        <position position="358"/>
    </location>
</feature>
<feature type="modified residue" description="Phosphotyrosine" evidence="2">
    <location>
        <position position="414"/>
    </location>
</feature>
<feature type="modified residue" description="N6-acetyllysine" evidence="3">
    <location>
        <position position="533"/>
    </location>
</feature>
<feature type="modified residue" description="Phosphotyrosine" evidence="2">
    <location>
        <position position="552"/>
    </location>
</feature>
<feature type="modified residue" description="Phosphotyrosine" evidence="2">
    <location>
        <position position="600"/>
    </location>
</feature>
<feature type="modified residue" description="Phosphothreonine" evidence="2">
    <location>
        <position position="691"/>
    </location>
</feature>
<feature type="disulfide bond" evidence="2">
    <location>
        <begin position="164"/>
        <end position="177"/>
    </location>
</feature>
<accession>Q3SX14</accession>
<keyword id="KW-0007">Acetylation</keyword>
<keyword id="KW-0117">Actin capping</keyword>
<keyword id="KW-0009">Actin-binding</keyword>
<keyword id="KW-0106">Calcium</keyword>
<keyword id="KW-0970">Cilium biogenesis/degradation</keyword>
<keyword id="KW-0963">Cytoplasm</keyword>
<keyword id="KW-0206">Cytoskeleton</keyword>
<keyword id="KW-1015">Disulfide bond</keyword>
<keyword id="KW-0479">Metal-binding</keyword>
<keyword id="KW-0597">Phosphoprotein</keyword>
<keyword id="KW-1185">Reference proteome</keyword>
<keyword id="KW-0677">Repeat</keyword>
<evidence type="ECO:0000250" key="1"/>
<evidence type="ECO:0000250" key="2">
    <source>
        <dbReference type="UniProtKB" id="P06396"/>
    </source>
</evidence>
<evidence type="ECO:0000250" key="3">
    <source>
        <dbReference type="UniProtKB" id="P13020"/>
    </source>
</evidence>
<evidence type="ECO:0000255" key="4"/>
<evidence type="ECO:0000256" key="5">
    <source>
        <dbReference type="SAM" id="MobiDB-lite"/>
    </source>
</evidence>
<evidence type="ECO:0000305" key="6"/>
<dbReference type="EMBL" id="BC104560">
    <property type="protein sequence ID" value="AAI04561.1"/>
    <property type="molecule type" value="mRNA"/>
</dbReference>
<dbReference type="RefSeq" id="NP_001029799.1">
    <property type="nucleotide sequence ID" value="NM_001034627.1"/>
</dbReference>
<dbReference type="SMR" id="Q3SX14"/>
<dbReference type="FunCoup" id="Q3SX14">
    <property type="interactions" value="204"/>
</dbReference>
<dbReference type="STRING" id="9913.ENSBTAP00000026534"/>
<dbReference type="GlyGen" id="Q3SX14">
    <property type="glycosylation" value="1 site, 1 O-linked glycan (1 site)"/>
</dbReference>
<dbReference type="PaxDb" id="9913-ENSBTAP00000026534"/>
<dbReference type="PeptideAtlas" id="Q3SX14"/>
<dbReference type="GeneID" id="535077"/>
<dbReference type="KEGG" id="bta:535077"/>
<dbReference type="CTD" id="2934"/>
<dbReference type="eggNOG" id="KOG0443">
    <property type="taxonomic scope" value="Eukaryota"/>
</dbReference>
<dbReference type="InParanoid" id="Q3SX14"/>
<dbReference type="OrthoDB" id="6375767at2759"/>
<dbReference type="Proteomes" id="UP000009136">
    <property type="component" value="Unplaced"/>
</dbReference>
<dbReference type="GO" id="GO:0015629">
    <property type="term" value="C:actin cytoskeleton"/>
    <property type="evidence" value="ECO:0000318"/>
    <property type="project" value="GO_Central"/>
</dbReference>
<dbReference type="GO" id="GO:0005737">
    <property type="term" value="C:cytoplasm"/>
    <property type="evidence" value="ECO:0000318"/>
    <property type="project" value="GO_Central"/>
</dbReference>
<dbReference type="GO" id="GO:0005615">
    <property type="term" value="C:extracellular space"/>
    <property type="evidence" value="ECO:0000318"/>
    <property type="project" value="GO_Central"/>
</dbReference>
<dbReference type="GO" id="GO:0051015">
    <property type="term" value="F:actin filament binding"/>
    <property type="evidence" value="ECO:0000318"/>
    <property type="project" value="GO_Central"/>
</dbReference>
<dbReference type="GO" id="GO:0046872">
    <property type="term" value="F:metal ion binding"/>
    <property type="evidence" value="ECO:0007669"/>
    <property type="project" value="UniProtKB-KW"/>
</dbReference>
<dbReference type="GO" id="GO:0005546">
    <property type="term" value="F:phosphatidylinositol-4,5-bisphosphate binding"/>
    <property type="evidence" value="ECO:0000318"/>
    <property type="project" value="GO_Central"/>
</dbReference>
<dbReference type="GO" id="GO:0051014">
    <property type="term" value="P:actin filament severing"/>
    <property type="evidence" value="ECO:0000318"/>
    <property type="project" value="GO_Central"/>
</dbReference>
<dbReference type="GO" id="GO:0008154">
    <property type="term" value="P:actin polymerization or depolymerization"/>
    <property type="evidence" value="ECO:0000318"/>
    <property type="project" value="GO_Central"/>
</dbReference>
<dbReference type="GO" id="GO:0051016">
    <property type="term" value="P:barbed-end actin filament capping"/>
    <property type="evidence" value="ECO:0000318"/>
    <property type="project" value="GO_Central"/>
</dbReference>
<dbReference type="GO" id="GO:0030031">
    <property type="term" value="P:cell projection assembly"/>
    <property type="evidence" value="ECO:0000318"/>
    <property type="project" value="GO_Central"/>
</dbReference>
<dbReference type="GO" id="GO:0007417">
    <property type="term" value="P:central nervous system development"/>
    <property type="evidence" value="ECO:0000318"/>
    <property type="project" value="GO_Central"/>
</dbReference>
<dbReference type="GO" id="GO:0060271">
    <property type="term" value="P:cilium assembly"/>
    <property type="evidence" value="ECO:0000250"/>
    <property type="project" value="UniProtKB"/>
</dbReference>
<dbReference type="CDD" id="cd11290">
    <property type="entry name" value="gelsolin_S1_like"/>
    <property type="match status" value="1"/>
</dbReference>
<dbReference type="CDD" id="cd11289">
    <property type="entry name" value="gelsolin_S2_like"/>
    <property type="match status" value="1"/>
</dbReference>
<dbReference type="CDD" id="cd11292">
    <property type="entry name" value="gelsolin_S3_like"/>
    <property type="match status" value="1"/>
</dbReference>
<dbReference type="CDD" id="cd11293">
    <property type="entry name" value="gelsolin_S4_like"/>
    <property type="match status" value="1"/>
</dbReference>
<dbReference type="CDD" id="cd11288">
    <property type="entry name" value="gelsolin_S5_like"/>
    <property type="match status" value="1"/>
</dbReference>
<dbReference type="CDD" id="cd11291">
    <property type="entry name" value="gelsolin_S6_like"/>
    <property type="match status" value="1"/>
</dbReference>
<dbReference type="FunFam" id="3.40.20.10:FF:000001">
    <property type="entry name" value="Gelsolin"/>
    <property type="match status" value="1"/>
</dbReference>
<dbReference type="FunFam" id="3.40.20.10:FF:000002">
    <property type="entry name" value="Gelsolin"/>
    <property type="match status" value="1"/>
</dbReference>
<dbReference type="FunFam" id="3.40.20.10:FF:000004">
    <property type="entry name" value="Gelsolin"/>
    <property type="match status" value="1"/>
</dbReference>
<dbReference type="FunFam" id="3.40.20.10:FF:000005">
    <property type="entry name" value="Gelsolin"/>
    <property type="match status" value="1"/>
</dbReference>
<dbReference type="FunFam" id="3.40.20.10:FF:000009">
    <property type="entry name" value="gelsolin isoform X1"/>
    <property type="match status" value="1"/>
</dbReference>
<dbReference type="FunFam" id="3.40.20.10:FF:000008">
    <property type="entry name" value="gelsolin isoform X2"/>
    <property type="match status" value="1"/>
</dbReference>
<dbReference type="Gene3D" id="3.40.20.10">
    <property type="entry name" value="Severin"/>
    <property type="match status" value="6"/>
</dbReference>
<dbReference type="InterPro" id="IPR029006">
    <property type="entry name" value="ADF-H/Gelsolin-like_dom_sf"/>
</dbReference>
<dbReference type="InterPro" id="IPR007123">
    <property type="entry name" value="Gelsolin-like_dom"/>
</dbReference>
<dbReference type="InterPro" id="IPR007122">
    <property type="entry name" value="Villin/Gelsolin"/>
</dbReference>
<dbReference type="PANTHER" id="PTHR11977:SF29">
    <property type="entry name" value="GELSOLIN"/>
    <property type="match status" value="1"/>
</dbReference>
<dbReference type="PANTHER" id="PTHR11977">
    <property type="entry name" value="VILLIN"/>
    <property type="match status" value="1"/>
</dbReference>
<dbReference type="Pfam" id="PF00626">
    <property type="entry name" value="Gelsolin"/>
    <property type="match status" value="6"/>
</dbReference>
<dbReference type="PRINTS" id="PR00597">
    <property type="entry name" value="GELSOLIN"/>
</dbReference>
<dbReference type="SMART" id="SM00262">
    <property type="entry name" value="GEL"/>
    <property type="match status" value="6"/>
</dbReference>
<dbReference type="SUPFAM" id="SSF55753">
    <property type="entry name" value="Actin depolymerizing proteins"/>
    <property type="match status" value="6"/>
</dbReference>
<organism>
    <name type="scientific">Bos taurus</name>
    <name type="common">Bovine</name>
    <dbReference type="NCBI Taxonomy" id="9913"/>
    <lineage>
        <taxon>Eukaryota</taxon>
        <taxon>Metazoa</taxon>
        <taxon>Chordata</taxon>
        <taxon>Craniata</taxon>
        <taxon>Vertebrata</taxon>
        <taxon>Euteleostomi</taxon>
        <taxon>Mammalia</taxon>
        <taxon>Eutheria</taxon>
        <taxon>Laurasiatheria</taxon>
        <taxon>Artiodactyla</taxon>
        <taxon>Ruminantia</taxon>
        <taxon>Pecora</taxon>
        <taxon>Bovidae</taxon>
        <taxon>Bovinae</taxon>
        <taxon>Bos</taxon>
    </lineage>
</organism>
<comment type="function">
    <text evidence="2">Calcium-regulated, actin-modulating protein that binds to the plus (or barbed) ends of actin monomers or filaments, preventing monomer exchange (end-blocking or capping). It can promote the assembly of monomers into filaments (nucleation) as well as sever filaments already formed (By similarity). Plays a role in ciliogenesis (By similarity).</text>
</comment>
<comment type="subunit">
    <text evidence="1 3">Binds to actin and to fibronectin. Identified in a complex composed of ACTA1, COBL, GSN and TMSB4X (By similarity). Interacts with the inactive form of EIF2AK2/PKR (By similarity). Interacts with FLII (By similarity).</text>
</comment>
<comment type="subcellular location">
    <subcellularLocation>
        <location evidence="1">Cytoplasm</location>
        <location evidence="1">Cytoskeleton</location>
    </subcellularLocation>
</comment>
<comment type="domain">
    <text evidence="2">Comprises six structurally related gelsolin-like (G1-G6) domains, that, in a calcium-free environment, are packed together to form a compact globular structure in which the putative actin-binding sequences are not sufficiently exposed to enable binding to occur. Binding calcium may release the connections that join the N- and C-terminal halves of gelsolin, enabling each half to bind actin relatively independently. G1 and G4 bind two Ca(2+) in a type I and in a type II manner. G2, G3, G5 and G6 bind only one Ca(2+) in a type II manner. Type I Ca(2+) binding sites are shared between actin and gelsolin-like repeats G1 and G4. Type I binding governs the strength of interactions between gelsolin and actin by direct participation at the binding interface. Ca(2+) binding to G2 and G6 disrupts the interactions between G2 and G6, releases the C-terminal tail, and induces large interdomain rearrangements that result in the exposure of the F-actin-binding site on G2 and contributes to the activation of gelsolin. Binding to phosphoinositides may inhibit the severing and capping properties of gelsolin.</text>
</comment>
<comment type="similarity">
    <text evidence="6">Belongs to the villin/gelsolin family.</text>
</comment>
<reference key="1">
    <citation type="submission" date="2005-09" db="EMBL/GenBank/DDBJ databases">
        <authorList>
            <consortium name="NIH - Mammalian Gene Collection (MGC) project"/>
        </authorList>
    </citation>
    <scope>NUCLEOTIDE SEQUENCE [LARGE SCALE MRNA]</scope>
    <source>
        <strain>Crossbred X Angus</strain>
        <tissue>Ileum</tissue>
    </source>
</reference>